<proteinExistence type="inferred from homology"/>
<protein>
    <recommendedName>
        <fullName evidence="1">Alanine--tRNA ligase</fullName>
        <ecNumber evidence="1">6.1.1.7</ecNumber>
    </recommendedName>
    <alternativeName>
        <fullName evidence="1">Alanyl-tRNA synthetase</fullName>
        <shortName evidence="1">AlaRS</shortName>
    </alternativeName>
</protein>
<comment type="function">
    <text evidence="1">Catalyzes the attachment of alanine to tRNA(Ala) in a two-step reaction: alanine is first activated by ATP to form Ala-AMP and then transferred to the acceptor end of tRNA(Ala). Also edits incorrectly charged Ser-tRNA(Ala) and Gly-tRNA(Ala) via its editing domain.</text>
</comment>
<comment type="catalytic activity">
    <reaction evidence="1">
        <text>tRNA(Ala) + L-alanine + ATP = L-alanyl-tRNA(Ala) + AMP + diphosphate</text>
        <dbReference type="Rhea" id="RHEA:12540"/>
        <dbReference type="Rhea" id="RHEA-COMP:9657"/>
        <dbReference type="Rhea" id="RHEA-COMP:9923"/>
        <dbReference type="ChEBI" id="CHEBI:30616"/>
        <dbReference type="ChEBI" id="CHEBI:33019"/>
        <dbReference type="ChEBI" id="CHEBI:57972"/>
        <dbReference type="ChEBI" id="CHEBI:78442"/>
        <dbReference type="ChEBI" id="CHEBI:78497"/>
        <dbReference type="ChEBI" id="CHEBI:456215"/>
        <dbReference type="EC" id="6.1.1.7"/>
    </reaction>
</comment>
<comment type="cofactor">
    <cofactor evidence="1">
        <name>Zn(2+)</name>
        <dbReference type="ChEBI" id="CHEBI:29105"/>
    </cofactor>
    <text evidence="1">Binds 1 zinc ion per subunit.</text>
</comment>
<comment type="subunit">
    <text evidence="1">Homotetramer.</text>
</comment>
<comment type="subcellular location">
    <subcellularLocation>
        <location evidence="1">Cytoplasm</location>
    </subcellularLocation>
</comment>
<comment type="domain">
    <text evidence="1">Consists of three domains; the N-terminal catalytic domain, the editing domain and the C-terminal C-Ala domain. The editing domain removes incorrectly charged amino acids, while the C-Ala domain, along with tRNA(Ala), serves as a bridge to cooperatively bring together the editing and aminoacylation centers thus stimulating deacylation of misacylated tRNAs.</text>
</comment>
<comment type="similarity">
    <text evidence="1">Belongs to the class-II aminoacyl-tRNA synthetase family.</text>
</comment>
<keyword id="KW-0030">Aminoacyl-tRNA synthetase</keyword>
<keyword id="KW-0067">ATP-binding</keyword>
<keyword id="KW-0963">Cytoplasm</keyword>
<keyword id="KW-0436">Ligase</keyword>
<keyword id="KW-0479">Metal-binding</keyword>
<keyword id="KW-0547">Nucleotide-binding</keyword>
<keyword id="KW-0648">Protein biosynthesis</keyword>
<keyword id="KW-0694">RNA-binding</keyword>
<keyword id="KW-0820">tRNA-binding</keyword>
<keyword id="KW-0862">Zinc</keyword>
<evidence type="ECO:0000255" key="1">
    <source>
        <dbReference type="HAMAP-Rule" id="MF_00036"/>
    </source>
</evidence>
<gene>
    <name evidence="1" type="primary">alaS</name>
    <name type="ordered locus">YPDSF_3056</name>
</gene>
<sequence>MSKSTAEIRQAFLDFFHSKGHQVVSSSTLVPNNDPTLLFTNAGMNQFKDVFLGLDKRAYSRATTSQRCVRAGGKHNDLENVGYTARHHTFFEMLGNFSFGDYFKHDAINFAWELLTSEQWFNLPKEKLWVTVYETDDEAYNIWANEVGVPHERIIRIGDNKGGAFASDNFWQMGDTGPCGPCSEIFFDHGDHIWGGPPGSAEEDGDRYIEIWNIVFMQFNRQSDGTMLPLPKPSVDTGMGLERIAAVLQHVNSNYEIDLFRDLIAAVADVTGATDLSSKSLRVIADHIRSCAFLISDGVIPSNENRGYVLRRIIRRAIRHGNMLGAKETFFYKLVAPLIAVMGPAAAELKQQQAMVEQVLKTEEEQFARTLERGLALLDDELSKLTGDTLDGETAFRLYDTYGFPVDLTADVCRERNLKVDEAGFEQAMEAQRRRARESSGFGADYNSLIRVDSASQFSGYDHVQQHATVTALFRNGEAVDEIHAGEEAVVVLNRTPFYGESGGQVGDKGELKNATATFSVTDTQKYGQAIGHVGILTTGTLRVNHSVEALVDVVRRNRIRLNHSATHLLHAALRNVLGEHVAQKGSLVNDKYLRFDFSHFEAMKPEQIRLVEDLVNEQIRRNMPVQTEVMELDAAKEKGAMALFGEKYDDQVRVLTMGDFSTELCGGTHASRTGDIGLFRILTESGTAAGIRRIEAVTGEGAIALLHQQSDLLQDVAHLVKGDIHNLADKVRAVLDRSKMLERELQQLKDQQAAQESASLSSSAKLINGVKLLVSQLDNVEPKMLRTMVDDLKNQLGSAIIVLATTADDKVSLIVGVTKDLTGKVKAGELIADIAQQVGGKGGGRPDMAQAGGTDVQALPAALASVEAWVASRM</sequence>
<name>SYA_YERPP</name>
<reference key="1">
    <citation type="submission" date="2007-02" db="EMBL/GenBank/DDBJ databases">
        <title>Complete sequence of chromosome of Yersinia pestis Pestoides F.</title>
        <authorList>
            <consortium name="US DOE Joint Genome Institute"/>
            <person name="Copeland A."/>
            <person name="Lucas S."/>
            <person name="Lapidus A."/>
            <person name="Barry K."/>
            <person name="Detter J.C."/>
            <person name="Glavina del Rio T."/>
            <person name="Hammon N."/>
            <person name="Israni S."/>
            <person name="Dalin E."/>
            <person name="Tice H."/>
            <person name="Pitluck S."/>
            <person name="Di Bartolo G."/>
            <person name="Chain P."/>
            <person name="Malfatti S."/>
            <person name="Shin M."/>
            <person name="Vergez L."/>
            <person name="Schmutz J."/>
            <person name="Larimer F."/>
            <person name="Land M."/>
            <person name="Hauser L."/>
            <person name="Worsham P."/>
            <person name="Chu M."/>
            <person name="Bearden S."/>
            <person name="Garcia E."/>
            <person name="Richardson P."/>
        </authorList>
    </citation>
    <scope>NUCLEOTIDE SEQUENCE [LARGE SCALE GENOMIC DNA]</scope>
    <source>
        <strain>Pestoides F</strain>
    </source>
</reference>
<accession>A4TQ52</accession>
<dbReference type="EC" id="6.1.1.7" evidence="1"/>
<dbReference type="EMBL" id="CP000668">
    <property type="protein sequence ID" value="ABP41414.1"/>
    <property type="molecule type" value="Genomic_DNA"/>
</dbReference>
<dbReference type="RefSeq" id="WP_002209448.1">
    <property type="nucleotide sequence ID" value="NZ_CP009715.1"/>
</dbReference>
<dbReference type="SMR" id="A4TQ52"/>
<dbReference type="GeneID" id="57975404"/>
<dbReference type="KEGG" id="ypp:YPDSF_3056"/>
<dbReference type="PATRIC" id="fig|386656.14.peg.1304"/>
<dbReference type="GO" id="GO:0005829">
    <property type="term" value="C:cytosol"/>
    <property type="evidence" value="ECO:0007669"/>
    <property type="project" value="TreeGrafter"/>
</dbReference>
<dbReference type="GO" id="GO:0004813">
    <property type="term" value="F:alanine-tRNA ligase activity"/>
    <property type="evidence" value="ECO:0007669"/>
    <property type="project" value="UniProtKB-UniRule"/>
</dbReference>
<dbReference type="GO" id="GO:0002161">
    <property type="term" value="F:aminoacyl-tRNA deacylase activity"/>
    <property type="evidence" value="ECO:0007669"/>
    <property type="project" value="TreeGrafter"/>
</dbReference>
<dbReference type="GO" id="GO:0005524">
    <property type="term" value="F:ATP binding"/>
    <property type="evidence" value="ECO:0007669"/>
    <property type="project" value="UniProtKB-UniRule"/>
</dbReference>
<dbReference type="GO" id="GO:0000049">
    <property type="term" value="F:tRNA binding"/>
    <property type="evidence" value="ECO:0007669"/>
    <property type="project" value="UniProtKB-KW"/>
</dbReference>
<dbReference type="GO" id="GO:0008270">
    <property type="term" value="F:zinc ion binding"/>
    <property type="evidence" value="ECO:0007669"/>
    <property type="project" value="UniProtKB-UniRule"/>
</dbReference>
<dbReference type="GO" id="GO:0006419">
    <property type="term" value="P:alanyl-tRNA aminoacylation"/>
    <property type="evidence" value="ECO:0007669"/>
    <property type="project" value="UniProtKB-UniRule"/>
</dbReference>
<dbReference type="GO" id="GO:0045892">
    <property type="term" value="P:negative regulation of DNA-templated transcription"/>
    <property type="evidence" value="ECO:0007669"/>
    <property type="project" value="TreeGrafter"/>
</dbReference>
<dbReference type="CDD" id="cd00673">
    <property type="entry name" value="AlaRS_core"/>
    <property type="match status" value="1"/>
</dbReference>
<dbReference type="FunFam" id="2.40.30.130:FF:000001">
    <property type="entry name" value="Alanine--tRNA ligase"/>
    <property type="match status" value="1"/>
</dbReference>
<dbReference type="FunFam" id="3.10.310.40:FF:000001">
    <property type="entry name" value="Alanine--tRNA ligase"/>
    <property type="match status" value="1"/>
</dbReference>
<dbReference type="FunFam" id="3.30.54.20:FF:000001">
    <property type="entry name" value="Alanine--tRNA ligase"/>
    <property type="match status" value="1"/>
</dbReference>
<dbReference type="FunFam" id="3.30.930.10:FF:000004">
    <property type="entry name" value="Alanine--tRNA ligase"/>
    <property type="match status" value="1"/>
</dbReference>
<dbReference type="FunFam" id="3.30.980.10:FF:000004">
    <property type="entry name" value="Alanine--tRNA ligase, cytoplasmic"/>
    <property type="match status" value="1"/>
</dbReference>
<dbReference type="Gene3D" id="2.40.30.130">
    <property type="match status" value="1"/>
</dbReference>
<dbReference type="Gene3D" id="3.10.310.40">
    <property type="match status" value="1"/>
</dbReference>
<dbReference type="Gene3D" id="3.30.54.20">
    <property type="match status" value="1"/>
</dbReference>
<dbReference type="Gene3D" id="6.10.250.550">
    <property type="match status" value="1"/>
</dbReference>
<dbReference type="Gene3D" id="3.30.930.10">
    <property type="entry name" value="Bira Bifunctional Protein, Domain 2"/>
    <property type="match status" value="1"/>
</dbReference>
<dbReference type="Gene3D" id="3.30.980.10">
    <property type="entry name" value="Threonyl-trna Synthetase, Chain A, domain 2"/>
    <property type="match status" value="1"/>
</dbReference>
<dbReference type="HAMAP" id="MF_00036_B">
    <property type="entry name" value="Ala_tRNA_synth_B"/>
    <property type="match status" value="1"/>
</dbReference>
<dbReference type="InterPro" id="IPR045864">
    <property type="entry name" value="aa-tRNA-synth_II/BPL/LPL"/>
</dbReference>
<dbReference type="InterPro" id="IPR002318">
    <property type="entry name" value="Ala-tRNA-lgiase_IIc"/>
</dbReference>
<dbReference type="InterPro" id="IPR018162">
    <property type="entry name" value="Ala-tRNA-ligase_IIc_anticod-bd"/>
</dbReference>
<dbReference type="InterPro" id="IPR018165">
    <property type="entry name" value="Ala-tRNA-synth_IIc_core"/>
</dbReference>
<dbReference type="InterPro" id="IPR018164">
    <property type="entry name" value="Ala-tRNA-synth_IIc_N"/>
</dbReference>
<dbReference type="InterPro" id="IPR050058">
    <property type="entry name" value="Ala-tRNA_ligase"/>
</dbReference>
<dbReference type="InterPro" id="IPR023033">
    <property type="entry name" value="Ala_tRNA_ligase_euk/bac"/>
</dbReference>
<dbReference type="InterPro" id="IPR003156">
    <property type="entry name" value="DHHA1_dom"/>
</dbReference>
<dbReference type="InterPro" id="IPR018163">
    <property type="entry name" value="Thr/Ala-tRNA-synth_IIc_edit"/>
</dbReference>
<dbReference type="InterPro" id="IPR009000">
    <property type="entry name" value="Transl_B-barrel_sf"/>
</dbReference>
<dbReference type="InterPro" id="IPR012947">
    <property type="entry name" value="tRNA_SAD"/>
</dbReference>
<dbReference type="NCBIfam" id="TIGR00344">
    <property type="entry name" value="alaS"/>
    <property type="match status" value="1"/>
</dbReference>
<dbReference type="PANTHER" id="PTHR11777:SF9">
    <property type="entry name" value="ALANINE--TRNA LIGASE, CYTOPLASMIC"/>
    <property type="match status" value="1"/>
</dbReference>
<dbReference type="PANTHER" id="PTHR11777">
    <property type="entry name" value="ALANYL-TRNA SYNTHETASE"/>
    <property type="match status" value="1"/>
</dbReference>
<dbReference type="Pfam" id="PF02272">
    <property type="entry name" value="DHHA1"/>
    <property type="match status" value="1"/>
</dbReference>
<dbReference type="Pfam" id="PF01411">
    <property type="entry name" value="tRNA-synt_2c"/>
    <property type="match status" value="1"/>
</dbReference>
<dbReference type="Pfam" id="PF07973">
    <property type="entry name" value="tRNA_SAD"/>
    <property type="match status" value="1"/>
</dbReference>
<dbReference type="PRINTS" id="PR00980">
    <property type="entry name" value="TRNASYNTHALA"/>
</dbReference>
<dbReference type="SMART" id="SM00863">
    <property type="entry name" value="tRNA_SAD"/>
    <property type="match status" value="1"/>
</dbReference>
<dbReference type="SUPFAM" id="SSF55681">
    <property type="entry name" value="Class II aaRS and biotin synthetases"/>
    <property type="match status" value="1"/>
</dbReference>
<dbReference type="SUPFAM" id="SSF101353">
    <property type="entry name" value="Putative anticodon-binding domain of alanyl-tRNA synthetase (AlaRS)"/>
    <property type="match status" value="1"/>
</dbReference>
<dbReference type="SUPFAM" id="SSF55186">
    <property type="entry name" value="ThrRS/AlaRS common domain"/>
    <property type="match status" value="1"/>
</dbReference>
<dbReference type="SUPFAM" id="SSF50447">
    <property type="entry name" value="Translation proteins"/>
    <property type="match status" value="1"/>
</dbReference>
<dbReference type="PROSITE" id="PS50860">
    <property type="entry name" value="AA_TRNA_LIGASE_II_ALA"/>
    <property type="match status" value="1"/>
</dbReference>
<feature type="chain" id="PRO_0000347870" description="Alanine--tRNA ligase">
    <location>
        <begin position="1"/>
        <end position="875"/>
    </location>
</feature>
<feature type="binding site" evidence="1">
    <location>
        <position position="564"/>
    </location>
    <ligand>
        <name>Zn(2+)</name>
        <dbReference type="ChEBI" id="CHEBI:29105"/>
    </ligand>
</feature>
<feature type="binding site" evidence="1">
    <location>
        <position position="568"/>
    </location>
    <ligand>
        <name>Zn(2+)</name>
        <dbReference type="ChEBI" id="CHEBI:29105"/>
    </ligand>
</feature>
<feature type="binding site" evidence="1">
    <location>
        <position position="666"/>
    </location>
    <ligand>
        <name>Zn(2+)</name>
        <dbReference type="ChEBI" id="CHEBI:29105"/>
    </ligand>
</feature>
<feature type="binding site" evidence="1">
    <location>
        <position position="670"/>
    </location>
    <ligand>
        <name>Zn(2+)</name>
        <dbReference type="ChEBI" id="CHEBI:29105"/>
    </ligand>
</feature>
<organism>
    <name type="scientific">Yersinia pestis (strain Pestoides F)</name>
    <dbReference type="NCBI Taxonomy" id="386656"/>
    <lineage>
        <taxon>Bacteria</taxon>
        <taxon>Pseudomonadati</taxon>
        <taxon>Pseudomonadota</taxon>
        <taxon>Gammaproteobacteria</taxon>
        <taxon>Enterobacterales</taxon>
        <taxon>Yersiniaceae</taxon>
        <taxon>Yersinia</taxon>
    </lineage>
</organism>